<name>ISPA_GEOSE</name>
<protein>
    <recommendedName>
        <fullName>Farnesyl diphosphate synthase</fullName>
        <shortName>FPP synthase</shortName>
        <ecNumber>2.5.1.10</ecNumber>
    </recommendedName>
    <alternativeName>
        <fullName>(2E,6E)-farnesyl diphosphate synthase</fullName>
    </alternativeName>
    <alternativeName>
        <fullName>Geranyltranstransferase</fullName>
    </alternativeName>
</protein>
<dbReference type="EC" id="2.5.1.10"/>
<dbReference type="EMBL" id="D13293">
    <property type="protein sequence ID" value="BAA02551.1"/>
    <property type="molecule type" value="Genomic_DNA"/>
</dbReference>
<dbReference type="EMBL" id="S72629">
    <property type="protein sequence ID" value="AAB32272.1"/>
    <property type="molecule type" value="Genomic_DNA"/>
</dbReference>
<dbReference type="EMBL" id="S72630">
    <property type="protein sequence ID" value="AAB32273.2"/>
    <property type="status" value="ALT_SEQ"/>
    <property type="molecule type" value="Genomic_DNA"/>
</dbReference>
<dbReference type="EMBL" id="S72633">
    <property type="protein sequence ID" value="AAB32274.1"/>
    <property type="molecule type" value="Genomic_DNA"/>
</dbReference>
<dbReference type="EMBL" id="S72635">
    <property type="protein sequence ID" value="AAB32275.2"/>
    <property type="status" value="ALT_SEQ"/>
    <property type="molecule type" value="Genomic_DNA"/>
</dbReference>
<dbReference type="PIR" id="JX0257">
    <property type="entry name" value="JX0257"/>
</dbReference>
<dbReference type="RefSeq" id="WP_033016440.1">
    <property type="nucleotide sequence ID" value="NZ_RCTH01000002.1"/>
</dbReference>
<dbReference type="PDB" id="5AYP">
    <property type="method" value="X-ray"/>
    <property type="resolution" value="2.31 A"/>
    <property type="chains" value="A/B=1-297"/>
</dbReference>
<dbReference type="PDBsum" id="5AYP"/>
<dbReference type="SMR" id="Q08291"/>
<dbReference type="ChEMBL" id="CHEMBL4786"/>
<dbReference type="GeneID" id="89611408"/>
<dbReference type="BRENDA" id="2.5.1.10">
    <property type="organism ID" value="623"/>
</dbReference>
<dbReference type="SABIO-RK" id="Q08291"/>
<dbReference type="GO" id="GO:0005737">
    <property type="term" value="C:cytoplasm"/>
    <property type="evidence" value="ECO:0007669"/>
    <property type="project" value="UniProtKB-SubCell"/>
</dbReference>
<dbReference type="GO" id="GO:0004337">
    <property type="term" value="F:(2E,6E)-farnesyl diphosphate synthase activity"/>
    <property type="evidence" value="ECO:0007669"/>
    <property type="project" value="UniProtKB-EC"/>
</dbReference>
<dbReference type="GO" id="GO:0046872">
    <property type="term" value="F:metal ion binding"/>
    <property type="evidence" value="ECO:0007669"/>
    <property type="project" value="UniProtKB-KW"/>
</dbReference>
<dbReference type="GO" id="GO:0008299">
    <property type="term" value="P:isoprenoid biosynthetic process"/>
    <property type="evidence" value="ECO:0007669"/>
    <property type="project" value="UniProtKB-KW"/>
</dbReference>
<dbReference type="CDD" id="cd00685">
    <property type="entry name" value="Trans_IPPS_HT"/>
    <property type="match status" value="1"/>
</dbReference>
<dbReference type="FunFam" id="1.10.600.10:FF:000001">
    <property type="entry name" value="Geranylgeranyl diphosphate synthase"/>
    <property type="match status" value="1"/>
</dbReference>
<dbReference type="Gene3D" id="1.10.600.10">
    <property type="entry name" value="Farnesyl Diphosphate Synthase"/>
    <property type="match status" value="1"/>
</dbReference>
<dbReference type="InterPro" id="IPR008949">
    <property type="entry name" value="Isoprenoid_synthase_dom_sf"/>
</dbReference>
<dbReference type="InterPro" id="IPR000092">
    <property type="entry name" value="Polyprenyl_synt"/>
</dbReference>
<dbReference type="InterPro" id="IPR033749">
    <property type="entry name" value="Polyprenyl_synt_CS"/>
</dbReference>
<dbReference type="InterPro" id="IPR053378">
    <property type="entry name" value="Prenyl_diphosphate_synthase"/>
</dbReference>
<dbReference type="NCBIfam" id="NF045485">
    <property type="entry name" value="FPPsyn"/>
    <property type="match status" value="1"/>
</dbReference>
<dbReference type="PANTHER" id="PTHR43281">
    <property type="entry name" value="FARNESYL DIPHOSPHATE SYNTHASE"/>
    <property type="match status" value="1"/>
</dbReference>
<dbReference type="PANTHER" id="PTHR43281:SF1">
    <property type="entry name" value="FARNESYL DIPHOSPHATE SYNTHASE"/>
    <property type="match status" value="1"/>
</dbReference>
<dbReference type="Pfam" id="PF00348">
    <property type="entry name" value="polyprenyl_synt"/>
    <property type="match status" value="1"/>
</dbReference>
<dbReference type="SFLD" id="SFLDS00005">
    <property type="entry name" value="Isoprenoid_Synthase_Type_I"/>
    <property type="match status" value="1"/>
</dbReference>
<dbReference type="SFLD" id="SFLDG01017">
    <property type="entry name" value="Polyprenyl_Transferase_Like"/>
    <property type="match status" value="1"/>
</dbReference>
<dbReference type="SUPFAM" id="SSF48576">
    <property type="entry name" value="Terpenoid synthases"/>
    <property type="match status" value="1"/>
</dbReference>
<dbReference type="PROSITE" id="PS00723">
    <property type="entry name" value="POLYPRENYL_SYNTHASE_1"/>
    <property type="match status" value="1"/>
</dbReference>
<dbReference type="PROSITE" id="PS00444">
    <property type="entry name" value="POLYPRENYL_SYNTHASE_2"/>
    <property type="match status" value="1"/>
</dbReference>
<comment type="catalytic activity">
    <reaction>
        <text>isopentenyl diphosphate + (2E)-geranyl diphosphate = (2E,6E)-farnesyl diphosphate + diphosphate</text>
        <dbReference type="Rhea" id="RHEA:19361"/>
        <dbReference type="ChEBI" id="CHEBI:33019"/>
        <dbReference type="ChEBI" id="CHEBI:58057"/>
        <dbReference type="ChEBI" id="CHEBI:128769"/>
        <dbReference type="ChEBI" id="CHEBI:175763"/>
        <dbReference type="EC" id="2.5.1.10"/>
    </reaction>
</comment>
<comment type="cofactor">
    <cofactor evidence="1">
        <name>Mg(2+)</name>
        <dbReference type="ChEBI" id="CHEBI:18420"/>
    </cofactor>
    <text evidence="1">Binds 2 Mg(2+) ions per subunit.</text>
</comment>
<comment type="subcellular location">
    <subcellularLocation>
        <location>Cytoplasm</location>
    </subcellularLocation>
</comment>
<comment type="similarity">
    <text evidence="5">Belongs to the FPP/GGPP synthase family.</text>
</comment>
<keyword id="KW-0002">3D-structure</keyword>
<keyword id="KW-0963">Cytoplasm</keyword>
<keyword id="KW-0903">Direct protein sequencing</keyword>
<keyword id="KW-0414">Isoprene biosynthesis</keyword>
<keyword id="KW-0460">Magnesium</keyword>
<keyword id="KW-0479">Metal-binding</keyword>
<keyword id="KW-0808">Transferase</keyword>
<organism>
    <name type="scientific">Geobacillus stearothermophilus</name>
    <name type="common">Bacillus stearothermophilus</name>
    <dbReference type="NCBI Taxonomy" id="1422"/>
    <lineage>
        <taxon>Bacteria</taxon>
        <taxon>Bacillati</taxon>
        <taxon>Bacillota</taxon>
        <taxon>Bacilli</taxon>
        <taxon>Bacillales</taxon>
        <taxon>Anoxybacillaceae</taxon>
        <taxon>Geobacillus</taxon>
    </lineage>
</organism>
<accession>Q08291</accession>
<accession>Q53435</accession>
<accession>Q53436</accession>
<accession>Q53437</accession>
<accession>Q53438</accession>
<feature type="chain" id="PRO_0000123985" description="Farnesyl diphosphate synthase">
    <location>
        <begin position="1"/>
        <end position="297"/>
    </location>
</feature>
<feature type="binding site" evidence="2">
    <location>
        <position position="47"/>
    </location>
    <ligand>
        <name>isopentenyl diphosphate</name>
        <dbReference type="ChEBI" id="CHEBI:128769"/>
    </ligand>
</feature>
<feature type="binding site" evidence="2">
    <location>
        <position position="50"/>
    </location>
    <ligand>
        <name>isopentenyl diphosphate</name>
        <dbReference type="ChEBI" id="CHEBI:128769"/>
    </ligand>
</feature>
<feature type="binding site" evidence="3">
    <location>
        <position position="79"/>
    </location>
    <ligand>
        <name>isopentenyl diphosphate</name>
        <dbReference type="ChEBI" id="CHEBI:128769"/>
    </ligand>
</feature>
<feature type="binding site" evidence="2">
    <location>
        <position position="86"/>
    </location>
    <ligand>
        <name>Mg(2+)</name>
        <dbReference type="ChEBI" id="CHEBI:18420"/>
        <label>1</label>
    </ligand>
</feature>
<feature type="binding site" evidence="2">
    <location>
        <position position="86"/>
    </location>
    <ligand>
        <name>Mg(2+)</name>
        <dbReference type="ChEBI" id="CHEBI:18420"/>
        <label>2</label>
    </ligand>
</feature>
<feature type="binding site" evidence="2">
    <location>
        <position position="92"/>
    </location>
    <ligand>
        <name>Mg(2+)</name>
        <dbReference type="ChEBI" id="CHEBI:18420"/>
        <label>1</label>
    </ligand>
</feature>
<feature type="binding site" evidence="2">
    <location>
        <position position="92"/>
    </location>
    <ligand>
        <name>Mg(2+)</name>
        <dbReference type="ChEBI" id="CHEBI:18420"/>
        <label>2</label>
    </ligand>
</feature>
<feature type="binding site" evidence="1">
    <location>
        <position position="97"/>
    </location>
    <ligand>
        <name>(2E)-geranyl diphosphate</name>
        <dbReference type="ChEBI" id="CHEBI:58057"/>
    </ligand>
</feature>
<feature type="binding site" evidence="2">
    <location>
        <position position="98"/>
    </location>
    <ligand>
        <name>isopentenyl diphosphate</name>
        <dbReference type="ChEBI" id="CHEBI:128769"/>
    </ligand>
</feature>
<feature type="binding site" evidence="1">
    <location>
        <position position="183"/>
    </location>
    <ligand>
        <name>(2E)-geranyl diphosphate</name>
        <dbReference type="ChEBI" id="CHEBI:58057"/>
    </ligand>
</feature>
<feature type="binding site" evidence="1">
    <location>
        <position position="184"/>
    </location>
    <ligand>
        <name>(2E)-geranyl diphosphate</name>
        <dbReference type="ChEBI" id="CHEBI:58057"/>
    </ligand>
</feature>
<feature type="binding site" evidence="1">
    <location>
        <position position="221"/>
    </location>
    <ligand>
        <name>(2E)-geranyl diphosphate</name>
        <dbReference type="ChEBI" id="CHEBI:58057"/>
    </ligand>
</feature>
<feature type="binding site" evidence="1">
    <location>
        <position position="238"/>
    </location>
    <ligand>
        <name>(2E)-geranyl diphosphate</name>
        <dbReference type="ChEBI" id="CHEBI:58057"/>
    </ligand>
</feature>
<feature type="mutagenesis site" description="No loss of activity." evidence="4">
    <original>C</original>
    <variation>F</variation>
    <variation>S</variation>
    <location>
        <position position="73"/>
    </location>
</feature>
<feature type="mutagenesis site" description="No loss of activity." evidence="4">
    <original>C</original>
    <variation>F</variation>
    <variation>S</variation>
    <location>
        <position position="289"/>
    </location>
</feature>
<feature type="helix" evidence="6">
    <location>
        <begin position="5"/>
        <end position="26"/>
    </location>
</feature>
<feature type="helix" evidence="6">
    <location>
        <begin position="32"/>
        <end position="42"/>
    </location>
</feature>
<feature type="helix" evidence="6">
    <location>
        <begin position="49"/>
        <end position="60"/>
    </location>
</feature>
<feature type="helix" evidence="6">
    <location>
        <begin position="65"/>
        <end position="68"/>
    </location>
</feature>
<feature type="helix" evidence="6">
    <location>
        <begin position="69"/>
        <end position="87"/>
    </location>
</feature>
<feature type="turn" evidence="6">
    <location>
        <begin position="89"/>
        <end position="92"/>
    </location>
</feature>
<feature type="helix" evidence="6">
    <location>
        <begin position="103"/>
        <end position="128"/>
    </location>
</feature>
<feature type="helix" evidence="6">
    <location>
        <begin position="137"/>
        <end position="151"/>
    </location>
</feature>
<feature type="helix" evidence="6">
    <location>
        <begin position="156"/>
        <end position="164"/>
    </location>
</feature>
<feature type="helix" evidence="6">
    <location>
        <begin position="173"/>
        <end position="183"/>
    </location>
</feature>
<feature type="helix" evidence="6">
    <location>
        <begin position="185"/>
        <end position="199"/>
    </location>
</feature>
<feature type="helix" evidence="6">
    <location>
        <begin position="203"/>
        <end position="220"/>
    </location>
</feature>
<feature type="helix" evidence="6">
    <location>
        <begin position="252"/>
        <end position="255"/>
    </location>
</feature>
<feature type="helix" evidence="6">
    <location>
        <begin position="258"/>
        <end position="277"/>
    </location>
</feature>
<feature type="helix" evidence="6">
    <location>
        <begin position="283"/>
        <end position="293"/>
    </location>
</feature>
<sequence length="297" mass="32310">MAQLSVEQFLNEQKQAVETALSRYIERLEGPAKLKKAMAYSLEAGGKRIRPLLLLSTVRALGKDPAVGLPVACAIEMIHTYSLIHDDLPSMDNDDLRRGKPTNHKVFGEAMAILAGDGLLTYAFQLITEIDDERIPPSVRLRLIERLAKAAGPEGMVAGQAADMEGEGKTLTLSELEYIHRHKTGKMLQYSVHAGALIGGADARQTRELDEFAAHLGLAFQIRDDILDIEGAEEKIGKPVGSDQSNNKATYPALLSLAGAKEKLAFHIEAAQRHLRNADVDGAALAYICELVAARDH</sequence>
<proteinExistence type="evidence at protein level"/>
<reference key="1">
    <citation type="journal article" date="1993" name="J. Biochem.">
        <title>Thermostable farnesyl diphosphate synthase of Bacillus stearothermophilus: molecular cloning, sequence determination, overproduction, and purification.</title>
        <authorList>
            <person name="Koyama T."/>
            <person name="Obata S."/>
            <person name="Osabe M."/>
            <person name="Takeshita A."/>
            <person name="Yokoyama K."/>
            <person name="Uchida M."/>
            <person name="Nishino T."/>
            <person name="Ogura K."/>
        </authorList>
    </citation>
    <scope>NUCLEOTIDE SEQUENCE [GENOMIC DNA]</scope>
    <scope>PARTIAL PROTEIN SEQUENCE</scope>
    <source>
        <strain>ATCC 10149 / DSM 6790 / CCM 5965 / CIP 105453 / JCM 11297 / NRS T15</strain>
    </source>
</reference>
<reference key="2">
    <citation type="journal article" date="1994" name="Biochemistry">
        <title>Structural and functional roles of the cysteine residues of Bacillus stearothermophilus farnesyl diphosphate synthase.</title>
        <authorList>
            <person name="Koyama T."/>
            <person name="Obata S."/>
            <person name="Saito K."/>
            <person name="Takeshita-Koike A."/>
            <person name="Ogura K."/>
        </authorList>
    </citation>
    <scope>MUTAGENESIS OF CYSTEINE RESIDUES</scope>
</reference>
<evidence type="ECO:0000250" key="1"/>
<evidence type="ECO:0000250" key="2">
    <source>
        <dbReference type="UniProtKB" id="P14324"/>
    </source>
</evidence>
<evidence type="ECO:0000250" key="3">
    <source>
        <dbReference type="UniProtKB" id="Q12051"/>
    </source>
</evidence>
<evidence type="ECO:0000269" key="4">
    <source>
    </source>
</evidence>
<evidence type="ECO:0000305" key="5"/>
<evidence type="ECO:0007829" key="6">
    <source>
        <dbReference type="PDB" id="5AYP"/>
    </source>
</evidence>